<comment type="function">
    <text>Involved in DNA repair. Has a probable role in repairing alkylated DNA and may regulate the activity of protein(s) involved in double strand break repair caused by gamma rays.</text>
</comment>
<comment type="catalytic activity">
    <reaction>
        <text>L-seryl-[protein] + ATP = O-phospho-L-seryl-[protein] + ADP + H(+)</text>
        <dbReference type="Rhea" id="RHEA:17989"/>
        <dbReference type="Rhea" id="RHEA-COMP:9863"/>
        <dbReference type="Rhea" id="RHEA-COMP:11604"/>
        <dbReference type="ChEBI" id="CHEBI:15378"/>
        <dbReference type="ChEBI" id="CHEBI:29999"/>
        <dbReference type="ChEBI" id="CHEBI:30616"/>
        <dbReference type="ChEBI" id="CHEBI:83421"/>
        <dbReference type="ChEBI" id="CHEBI:456216"/>
        <dbReference type="EC" id="2.7.11.1"/>
    </reaction>
</comment>
<comment type="catalytic activity">
    <reaction>
        <text>L-threonyl-[protein] + ATP = O-phospho-L-threonyl-[protein] + ADP + H(+)</text>
        <dbReference type="Rhea" id="RHEA:46608"/>
        <dbReference type="Rhea" id="RHEA-COMP:11060"/>
        <dbReference type="Rhea" id="RHEA-COMP:11605"/>
        <dbReference type="ChEBI" id="CHEBI:15378"/>
        <dbReference type="ChEBI" id="CHEBI:30013"/>
        <dbReference type="ChEBI" id="CHEBI:30616"/>
        <dbReference type="ChEBI" id="CHEBI:61977"/>
        <dbReference type="ChEBI" id="CHEBI:456216"/>
        <dbReference type="EC" id="2.7.11.1"/>
    </reaction>
</comment>
<comment type="subcellular location">
    <subcellularLocation>
        <location evidence="4">Nucleus</location>
    </subcellularLocation>
</comment>
<comment type="similarity">
    <text evidence="4">Belongs to the protein kinase superfamily. CK1 Ser/Thr protein kinase family. Casein kinase I subfamily.</text>
</comment>
<protein>
    <recommendedName>
        <fullName>Casein kinase I homolog hhp1</fullName>
        <ecNumber>2.7.11.1</ecNumber>
    </recommendedName>
</protein>
<keyword id="KW-0067">ATP-binding</keyword>
<keyword id="KW-0227">DNA damage</keyword>
<keyword id="KW-0234">DNA repair</keyword>
<keyword id="KW-0418">Kinase</keyword>
<keyword id="KW-0547">Nucleotide-binding</keyword>
<keyword id="KW-0539">Nucleus</keyword>
<keyword id="KW-1185">Reference proteome</keyword>
<keyword id="KW-0723">Serine/threonine-protein kinase</keyword>
<keyword id="KW-0808">Transferase</keyword>
<evidence type="ECO:0000255" key="1">
    <source>
        <dbReference type="PROSITE-ProRule" id="PRU00159"/>
    </source>
</evidence>
<evidence type="ECO:0000255" key="2">
    <source>
        <dbReference type="PROSITE-ProRule" id="PRU10027"/>
    </source>
</evidence>
<evidence type="ECO:0000256" key="3">
    <source>
        <dbReference type="SAM" id="MobiDB-lite"/>
    </source>
</evidence>
<evidence type="ECO:0000305" key="4"/>
<dbReference type="EC" id="2.7.11.1"/>
<dbReference type="EMBL" id="U10863">
    <property type="protein sequence ID" value="AAA21544.1"/>
    <property type="molecule type" value="mRNA"/>
</dbReference>
<dbReference type="EMBL" id="X78871">
    <property type="protein sequence ID" value="CAA55473.1"/>
    <property type="molecule type" value="mRNA"/>
</dbReference>
<dbReference type="EMBL" id="CU329671">
    <property type="protein sequence ID" value="CAA20311.1"/>
    <property type="molecule type" value="Genomic_DNA"/>
</dbReference>
<dbReference type="PIR" id="S46357">
    <property type="entry name" value="S46357"/>
</dbReference>
<dbReference type="RefSeq" id="NP_595760.1">
    <property type="nucleotide sequence ID" value="NM_001021661.2"/>
</dbReference>
<dbReference type="SMR" id="P40235"/>
<dbReference type="BioGRID" id="277241">
    <property type="interactions" value="31"/>
</dbReference>
<dbReference type="FunCoup" id="P40235">
    <property type="interactions" value="715"/>
</dbReference>
<dbReference type="STRING" id="284812.P40235"/>
<dbReference type="BindingDB" id="P40235"/>
<dbReference type="iPTMnet" id="P40235"/>
<dbReference type="SwissPalm" id="P40235"/>
<dbReference type="PaxDb" id="4896-SPBC3H7.15.1"/>
<dbReference type="EnsemblFungi" id="SPBC3H7.15.1">
    <property type="protein sequence ID" value="SPBC3H7.15.1:pep"/>
    <property type="gene ID" value="SPBC3H7.15"/>
</dbReference>
<dbReference type="GeneID" id="2540718"/>
<dbReference type="KEGG" id="spo:2540718"/>
<dbReference type="PomBase" id="SPBC3H7.15">
    <property type="gene designation" value="hhp1"/>
</dbReference>
<dbReference type="VEuPathDB" id="FungiDB:SPBC3H7.15"/>
<dbReference type="eggNOG" id="KOG1164">
    <property type="taxonomic scope" value="Eukaryota"/>
</dbReference>
<dbReference type="HOGENOM" id="CLU_019279_2_7_1"/>
<dbReference type="InParanoid" id="P40235"/>
<dbReference type="OMA" id="IFDWTFL"/>
<dbReference type="PhylomeDB" id="P40235"/>
<dbReference type="BRENDA" id="2.7.11.1">
    <property type="organism ID" value="5613"/>
</dbReference>
<dbReference type="Reactome" id="R-SPO-204005">
    <property type="pathway name" value="COPII-mediated vesicle transport"/>
</dbReference>
<dbReference type="PRO" id="PR:P40235"/>
<dbReference type="Proteomes" id="UP000002485">
    <property type="component" value="Chromosome II"/>
</dbReference>
<dbReference type="GO" id="GO:0032153">
    <property type="term" value="C:cell division site"/>
    <property type="evidence" value="ECO:0000314"/>
    <property type="project" value="PomBase"/>
</dbReference>
<dbReference type="GO" id="GO:0005737">
    <property type="term" value="C:cytoplasm"/>
    <property type="evidence" value="ECO:0000318"/>
    <property type="project" value="GO_Central"/>
</dbReference>
<dbReference type="GO" id="GO:0005829">
    <property type="term" value="C:cytosol"/>
    <property type="evidence" value="ECO:0007005"/>
    <property type="project" value="PomBase"/>
</dbReference>
<dbReference type="GO" id="GO:0044732">
    <property type="term" value="C:mitotic spindle pole body"/>
    <property type="evidence" value="ECO:0000314"/>
    <property type="project" value="PomBase"/>
</dbReference>
<dbReference type="GO" id="GO:0000228">
    <property type="term" value="C:nuclear chromosome"/>
    <property type="evidence" value="ECO:0000314"/>
    <property type="project" value="PomBase"/>
</dbReference>
<dbReference type="GO" id="GO:0005634">
    <property type="term" value="C:nucleus"/>
    <property type="evidence" value="ECO:0000314"/>
    <property type="project" value="PomBase"/>
</dbReference>
<dbReference type="GO" id="GO:0005816">
    <property type="term" value="C:spindle pole body"/>
    <property type="evidence" value="ECO:0000314"/>
    <property type="project" value="PomBase"/>
</dbReference>
<dbReference type="GO" id="GO:0005524">
    <property type="term" value="F:ATP binding"/>
    <property type="evidence" value="ECO:0000255"/>
    <property type="project" value="PomBase"/>
</dbReference>
<dbReference type="GO" id="GO:0004672">
    <property type="term" value="F:protein kinase activity"/>
    <property type="evidence" value="ECO:0000314"/>
    <property type="project" value="PomBase"/>
</dbReference>
<dbReference type="GO" id="GO:0106310">
    <property type="term" value="F:protein serine kinase activity"/>
    <property type="evidence" value="ECO:0007669"/>
    <property type="project" value="RHEA"/>
</dbReference>
<dbReference type="GO" id="GO:0004674">
    <property type="term" value="F:protein serine/threonine kinase activity"/>
    <property type="evidence" value="ECO:0000314"/>
    <property type="project" value="PomBase"/>
</dbReference>
<dbReference type="GO" id="GO:0004713">
    <property type="term" value="F:protein tyrosine kinase activity"/>
    <property type="evidence" value="ECO:0000314"/>
    <property type="project" value="PomBase"/>
</dbReference>
<dbReference type="GO" id="GO:0006281">
    <property type="term" value="P:DNA repair"/>
    <property type="evidence" value="ECO:0007669"/>
    <property type="project" value="UniProtKB-KW"/>
</dbReference>
<dbReference type="GO" id="GO:0006897">
    <property type="term" value="P:endocytosis"/>
    <property type="evidence" value="ECO:0000318"/>
    <property type="project" value="GO_Central"/>
</dbReference>
<dbReference type="GO" id="GO:0045143">
    <property type="term" value="P:homologous chromosome segregation"/>
    <property type="evidence" value="ECO:0000316"/>
    <property type="project" value="PomBase"/>
</dbReference>
<dbReference type="GO" id="GO:0051755">
    <property type="term" value="P:meiotic sister chromatid arm separation"/>
    <property type="evidence" value="ECO:0000269"/>
    <property type="project" value="PomBase"/>
</dbReference>
<dbReference type="GO" id="GO:2000781">
    <property type="term" value="P:positive regulation of double-strand break repair"/>
    <property type="evidence" value="ECO:0000315"/>
    <property type="project" value="PomBase"/>
</dbReference>
<dbReference type="GO" id="GO:0006282">
    <property type="term" value="P:regulation of DNA repair"/>
    <property type="evidence" value="ECO:0000315"/>
    <property type="project" value="PomBase"/>
</dbReference>
<dbReference type="GO" id="GO:0090006">
    <property type="term" value="P:regulation of linear element assembly"/>
    <property type="evidence" value="ECO:0000315"/>
    <property type="project" value="PomBase"/>
</dbReference>
<dbReference type="GO" id="GO:0007165">
    <property type="term" value="P:signal transduction"/>
    <property type="evidence" value="ECO:0000318"/>
    <property type="project" value="GO_Central"/>
</dbReference>
<dbReference type="CDD" id="cd14125">
    <property type="entry name" value="STKc_CK1_delta_epsilon"/>
    <property type="match status" value="1"/>
</dbReference>
<dbReference type="FunFam" id="1.10.510.10:FF:000159">
    <property type="entry name" value="Casein kinase I hhp1"/>
    <property type="match status" value="1"/>
</dbReference>
<dbReference type="FunFam" id="3.30.200.20:FF:000538">
    <property type="entry name" value="Putative Casein kinase I"/>
    <property type="match status" value="1"/>
</dbReference>
<dbReference type="Gene3D" id="1.10.510.10">
    <property type="entry name" value="Transferase(Phosphotransferase) domain 1"/>
    <property type="match status" value="1"/>
</dbReference>
<dbReference type="InterPro" id="IPR050235">
    <property type="entry name" value="CK1_Ser-Thr_kinase"/>
</dbReference>
<dbReference type="InterPro" id="IPR011009">
    <property type="entry name" value="Kinase-like_dom_sf"/>
</dbReference>
<dbReference type="InterPro" id="IPR000719">
    <property type="entry name" value="Prot_kinase_dom"/>
</dbReference>
<dbReference type="InterPro" id="IPR017441">
    <property type="entry name" value="Protein_kinase_ATP_BS"/>
</dbReference>
<dbReference type="InterPro" id="IPR008271">
    <property type="entry name" value="Ser/Thr_kinase_AS"/>
</dbReference>
<dbReference type="PANTHER" id="PTHR11909">
    <property type="entry name" value="CASEIN KINASE-RELATED"/>
    <property type="match status" value="1"/>
</dbReference>
<dbReference type="Pfam" id="PF00069">
    <property type="entry name" value="Pkinase"/>
    <property type="match status" value="1"/>
</dbReference>
<dbReference type="SMART" id="SM00220">
    <property type="entry name" value="S_TKc"/>
    <property type="match status" value="1"/>
</dbReference>
<dbReference type="SUPFAM" id="SSF56112">
    <property type="entry name" value="Protein kinase-like (PK-like)"/>
    <property type="match status" value="1"/>
</dbReference>
<dbReference type="PROSITE" id="PS00107">
    <property type="entry name" value="PROTEIN_KINASE_ATP"/>
    <property type="match status" value="1"/>
</dbReference>
<dbReference type="PROSITE" id="PS50011">
    <property type="entry name" value="PROTEIN_KINASE_DOM"/>
    <property type="match status" value="1"/>
</dbReference>
<dbReference type="PROSITE" id="PS00108">
    <property type="entry name" value="PROTEIN_KINASE_ST"/>
    <property type="match status" value="1"/>
</dbReference>
<reference key="1">
    <citation type="journal article" date="1994" name="Biochem. Biophys. Res. Commun.">
        <title>Molecular cloning and sequence analysis of two novel fission yeast casein kinase-1 isoforms.</title>
        <authorList>
            <person name="Kearney P."/>
            <person name="Ebert M."/>
            <person name="Kuret J."/>
        </authorList>
    </citation>
    <scope>NUCLEOTIDE SEQUENCE [MRNA]</scope>
    <source>
        <strain>SP66</strain>
    </source>
</reference>
<reference key="2">
    <citation type="journal article" date="1994" name="EMBO J.">
        <title>Characterization of two protein kinases from Schizosaccharomyces pombe involved in the regulation of DNA repair.</title>
        <authorList>
            <person name="Dhillon N."/>
            <person name="Hoekstra M.F."/>
        </authorList>
    </citation>
    <scope>NUCLEOTIDE SEQUENCE [MRNA]</scope>
</reference>
<reference key="3">
    <citation type="journal article" date="2002" name="Nature">
        <title>The genome sequence of Schizosaccharomyces pombe.</title>
        <authorList>
            <person name="Wood V."/>
            <person name="Gwilliam R."/>
            <person name="Rajandream M.A."/>
            <person name="Lyne M.H."/>
            <person name="Lyne R."/>
            <person name="Stewart A."/>
            <person name="Sgouros J.G."/>
            <person name="Peat N."/>
            <person name="Hayles J."/>
            <person name="Baker S.G."/>
            <person name="Basham D."/>
            <person name="Bowman S."/>
            <person name="Brooks K."/>
            <person name="Brown D."/>
            <person name="Brown S."/>
            <person name="Chillingworth T."/>
            <person name="Churcher C.M."/>
            <person name="Collins M."/>
            <person name="Connor R."/>
            <person name="Cronin A."/>
            <person name="Davis P."/>
            <person name="Feltwell T."/>
            <person name="Fraser A."/>
            <person name="Gentles S."/>
            <person name="Goble A."/>
            <person name="Hamlin N."/>
            <person name="Harris D.E."/>
            <person name="Hidalgo J."/>
            <person name="Hodgson G."/>
            <person name="Holroyd S."/>
            <person name="Hornsby T."/>
            <person name="Howarth S."/>
            <person name="Huckle E.J."/>
            <person name="Hunt S."/>
            <person name="Jagels K."/>
            <person name="James K.D."/>
            <person name="Jones L."/>
            <person name="Jones M."/>
            <person name="Leather S."/>
            <person name="McDonald S."/>
            <person name="McLean J."/>
            <person name="Mooney P."/>
            <person name="Moule S."/>
            <person name="Mungall K.L."/>
            <person name="Murphy L.D."/>
            <person name="Niblett D."/>
            <person name="Odell C."/>
            <person name="Oliver K."/>
            <person name="O'Neil S."/>
            <person name="Pearson D."/>
            <person name="Quail M.A."/>
            <person name="Rabbinowitsch E."/>
            <person name="Rutherford K.M."/>
            <person name="Rutter S."/>
            <person name="Saunders D."/>
            <person name="Seeger K."/>
            <person name="Sharp S."/>
            <person name="Skelton J."/>
            <person name="Simmonds M.N."/>
            <person name="Squares R."/>
            <person name="Squares S."/>
            <person name="Stevens K."/>
            <person name="Taylor K."/>
            <person name="Taylor R.G."/>
            <person name="Tivey A."/>
            <person name="Walsh S.V."/>
            <person name="Warren T."/>
            <person name="Whitehead S."/>
            <person name="Woodward J.R."/>
            <person name="Volckaert G."/>
            <person name="Aert R."/>
            <person name="Robben J."/>
            <person name="Grymonprez B."/>
            <person name="Weltjens I."/>
            <person name="Vanstreels E."/>
            <person name="Rieger M."/>
            <person name="Schaefer M."/>
            <person name="Mueller-Auer S."/>
            <person name="Gabel C."/>
            <person name="Fuchs M."/>
            <person name="Duesterhoeft A."/>
            <person name="Fritzc C."/>
            <person name="Holzer E."/>
            <person name="Moestl D."/>
            <person name="Hilbert H."/>
            <person name="Borzym K."/>
            <person name="Langer I."/>
            <person name="Beck A."/>
            <person name="Lehrach H."/>
            <person name="Reinhardt R."/>
            <person name="Pohl T.M."/>
            <person name="Eger P."/>
            <person name="Zimmermann W."/>
            <person name="Wedler H."/>
            <person name="Wambutt R."/>
            <person name="Purnelle B."/>
            <person name="Goffeau A."/>
            <person name="Cadieu E."/>
            <person name="Dreano S."/>
            <person name="Gloux S."/>
            <person name="Lelaure V."/>
            <person name="Mottier S."/>
            <person name="Galibert F."/>
            <person name="Aves S.J."/>
            <person name="Xiang Z."/>
            <person name="Hunt C."/>
            <person name="Moore K."/>
            <person name="Hurst S.M."/>
            <person name="Lucas M."/>
            <person name="Rochet M."/>
            <person name="Gaillardin C."/>
            <person name="Tallada V.A."/>
            <person name="Garzon A."/>
            <person name="Thode G."/>
            <person name="Daga R.R."/>
            <person name="Cruzado L."/>
            <person name="Jimenez J."/>
            <person name="Sanchez M."/>
            <person name="del Rey F."/>
            <person name="Benito J."/>
            <person name="Dominguez A."/>
            <person name="Revuelta J.L."/>
            <person name="Moreno S."/>
            <person name="Armstrong J."/>
            <person name="Forsburg S.L."/>
            <person name="Cerutti L."/>
            <person name="Lowe T."/>
            <person name="McCombie W.R."/>
            <person name="Paulsen I."/>
            <person name="Potashkin J."/>
            <person name="Shpakovski G.V."/>
            <person name="Ussery D."/>
            <person name="Barrell B.G."/>
            <person name="Nurse P."/>
        </authorList>
    </citation>
    <scope>NUCLEOTIDE SEQUENCE [LARGE SCALE GENOMIC DNA]</scope>
    <source>
        <strain>972 / ATCC 24843</strain>
    </source>
</reference>
<sequence>MALDLRIGNKYRIGRKIGSGSFGDIYLGTNVVSGEEVAIKLESTRAKHPQLEYEYRVYRILSGGVGIPFVRWFGVECDYNAMVMDLLGPSLEDLFNFCNRKFSLKTVLLLADQLISRIEFIHSKSFLHRDIKPDNFLMGIGKRGNQVNIIDFGLAKKYRDHKTHLHIPYRENKNLTGTARYASINTHLGIEQSRRDDLESLGYVLVYFCRGSLPWQGLKATTKKQKYEKIMEKKISTPTEVLCRGFPQEFSIYLNYTRSLRFDDKPDYAYLRKLFRDLFCRQSYEFDYMFDWTLKRKTQQDQQHQQQLQQQLSATPQAINPPPERSSFRNYQKQNFDEKGGDINTTVPVINDPSATGAQYINRPN</sequence>
<feature type="chain" id="PRO_0000192864" description="Casein kinase I homolog hhp1">
    <location>
        <begin position="1"/>
        <end position="365"/>
    </location>
</feature>
<feature type="domain" description="Protein kinase" evidence="1">
    <location>
        <begin position="11"/>
        <end position="279"/>
    </location>
</feature>
<feature type="region of interest" description="Disordered" evidence="3">
    <location>
        <begin position="301"/>
        <end position="365"/>
    </location>
</feature>
<feature type="compositionally biased region" description="Low complexity" evidence="3">
    <location>
        <begin position="301"/>
        <end position="311"/>
    </location>
</feature>
<feature type="compositionally biased region" description="Polar residues" evidence="3">
    <location>
        <begin position="343"/>
        <end position="365"/>
    </location>
</feature>
<feature type="active site" description="Proton acceptor" evidence="1 2">
    <location>
        <position position="130"/>
    </location>
</feature>
<feature type="binding site" evidence="1">
    <location>
        <begin position="17"/>
        <end position="25"/>
    </location>
    <ligand>
        <name>ATP</name>
        <dbReference type="ChEBI" id="CHEBI:30616"/>
    </ligand>
</feature>
<feature type="binding site" evidence="1">
    <location>
        <position position="40"/>
    </location>
    <ligand>
        <name>ATP</name>
        <dbReference type="ChEBI" id="CHEBI:30616"/>
    </ligand>
</feature>
<name>HHP1_SCHPO</name>
<accession>P40235</accession>
<proteinExistence type="evidence at transcript level"/>
<gene>
    <name type="primary">hhp1</name>
    <name type="ORF">SPBC3H7.15</name>
</gene>
<organism>
    <name type="scientific">Schizosaccharomyces pombe (strain 972 / ATCC 24843)</name>
    <name type="common">Fission yeast</name>
    <dbReference type="NCBI Taxonomy" id="284812"/>
    <lineage>
        <taxon>Eukaryota</taxon>
        <taxon>Fungi</taxon>
        <taxon>Dikarya</taxon>
        <taxon>Ascomycota</taxon>
        <taxon>Taphrinomycotina</taxon>
        <taxon>Schizosaccharomycetes</taxon>
        <taxon>Schizosaccharomycetales</taxon>
        <taxon>Schizosaccharomycetaceae</taxon>
        <taxon>Schizosaccharomyces</taxon>
    </lineage>
</organism>